<organism>
    <name type="scientific">Photobacterium profundum (strain SS9)</name>
    <dbReference type="NCBI Taxonomy" id="298386"/>
    <lineage>
        <taxon>Bacteria</taxon>
        <taxon>Pseudomonadati</taxon>
        <taxon>Pseudomonadota</taxon>
        <taxon>Gammaproteobacteria</taxon>
        <taxon>Vibrionales</taxon>
        <taxon>Vibrionaceae</taxon>
        <taxon>Photobacterium</taxon>
    </lineage>
</organism>
<sequence length="488" mass="53754">MIMIITKKTLLPVTLALFSSGVMAHGYVSSVEGGVAESRAALCKFPANGTGEKNTNCGSVQWEPQSVEGPDGFPETGPPDGKIASAGLSQFSPLDEQTVDRWVKRPMQAGIQNFEWTFTANHITRNWRYYITKQDWNPNKSLTRSAFDLTPFCQISGDMAKPPMRVHHSCNVPERKDYQVILAVWEVGDTAASFYNVIDVMFDGDLPTVPDWAVGGQIYPSMDLKSGDSVYTRVFDASGENSALSTELTIETEQQGQANNWSYSLAQQINNVYDNIRAGKADGEGNFAPIYGANPIYLKEGSGLERVEIGYNIITPEPDHDLDISGLENEYQIGDEPVSLELNLTAQGDQFVELTVYNHNKEALANKQVTLNDGDSQAVSMRLSKSEPGHHMLVTRIKDSSEGSLIDQITNDFHLTEGGDPPEGDYDYIFPEGLKSYTAGSKVLATDGRIYECKPFPYSGYCIQWSPSATQFEPGVGSDWSTAWIKLN</sequence>
<evidence type="ECO:0000255" key="1">
    <source>
        <dbReference type="HAMAP-Rule" id="MF_01905"/>
    </source>
</evidence>
<protein>
    <recommendedName>
        <fullName evidence="1">GlcNAc-binding protein A</fullName>
    </recommendedName>
</protein>
<keyword id="KW-0147">Chitin-binding</keyword>
<keyword id="KW-1185">Reference proteome</keyword>
<keyword id="KW-0964">Secreted</keyword>
<keyword id="KW-0732">Signal</keyword>
<comment type="function">
    <text evidence="1">Probably interacts with GlcNAc residues. May promote attachment to both epithelial cell surfaces and chitin.</text>
</comment>
<comment type="subcellular location">
    <subcellularLocation>
        <location evidence="1">Secreted</location>
    </subcellularLocation>
</comment>
<comment type="similarity">
    <text evidence="1">Belongs to the GbpA family.</text>
</comment>
<dbReference type="EMBL" id="CR378676">
    <property type="protein sequence ID" value="CAG22185.1"/>
    <property type="molecule type" value="Genomic_DNA"/>
</dbReference>
<dbReference type="SMR" id="Q6LKG5"/>
<dbReference type="STRING" id="298386.PBPRB0312"/>
<dbReference type="CAZy" id="AA10">
    <property type="family name" value="Auxiliary Activities 10"/>
</dbReference>
<dbReference type="CAZy" id="CBM73">
    <property type="family name" value="Carbohydrate-Binding Module Family 73"/>
</dbReference>
<dbReference type="KEGG" id="ppr:PBPRB0312"/>
<dbReference type="eggNOG" id="COG3397">
    <property type="taxonomic scope" value="Bacteria"/>
</dbReference>
<dbReference type="HOGENOM" id="CLU_039396_2_0_6"/>
<dbReference type="Proteomes" id="UP000000593">
    <property type="component" value="Chromosome 2"/>
</dbReference>
<dbReference type="GO" id="GO:0005576">
    <property type="term" value="C:extracellular region"/>
    <property type="evidence" value="ECO:0007669"/>
    <property type="project" value="UniProtKB-SubCell"/>
</dbReference>
<dbReference type="GO" id="GO:0008061">
    <property type="term" value="F:chitin binding"/>
    <property type="evidence" value="ECO:0007669"/>
    <property type="project" value="UniProtKB-UniRule"/>
</dbReference>
<dbReference type="CDD" id="cd21177">
    <property type="entry name" value="LPMO_AA10"/>
    <property type="match status" value="1"/>
</dbReference>
<dbReference type="FunFam" id="2.70.50.50:FF:000001">
    <property type="entry name" value="Chitin-binding protein"/>
    <property type="match status" value="1"/>
</dbReference>
<dbReference type="Gene3D" id="2.60.40.2550">
    <property type="match status" value="1"/>
</dbReference>
<dbReference type="Gene3D" id="3.30.70.2150">
    <property type="match status" value="1"/>
</dbReference>
<dbReference type="Gene3D" id="2.70.50.50">
    <property type="entry name" value="chitin-binding protein cbp21"/>
    <property type="match status" value="1"/>
</dbReference>
<dbReference type="HAMAP" id="MF_01905">
    <property type="entry name" value="GbpA"/>
    <property type="match status" value="1"/>
</dbReference>
<dbReference type="InterPro" id="IPR004302">
    <property type="entry name" value="Cellulose/chitin-bd_N"/>
</dbReference>
<dbReference type="InterPro" id="IPR041029">
    <property type="entry name" value="GbpA_2"/>
</dbReference>
<dbReference type="InterPro" id="IPR054063">
    <property type="entry name" value="GbpA_D3"/>
</dbReference>
<dbReference type="InterPro" id="IPR020879">
    <property type="entry name" value="GlcNAc-bd_A"/>
</dbReference>
<dbReference type="InterPro" id="IPR051024">
    <property type="entry name" value="GlcNAc_Chitin_IntDeg"/>
</dbReference>
<dbReference type="InterPro" id="IPR014756">
    <property type="entry name" value="Ig_E-set"/>
</dbReference>
<dbReference type="NCBIfam" id="NF009690">
    <property type="entry name" value="PRK13211.1"/>
    <property type="match status" value="1"/>
</dbReference>
<dbReference type="PANTHER" id="PTHR34823:SF1">
    <property type="entry name" value="CHITIN-BINDING TYPE-4 DOMAIN-CONTAINING PROTEIN"/>
    <property type="match status" value="1"/>
</dbReference>
<dbReference type="PANTHER" id="PTHR34823">
    <property type="entry name" value="GLCNAC-BINDING PROTEIN A"/>
    <property type="match status" value="1"/>
</dbReference>
<dbReference type="Pfam" id="PF18416">
    <property type="entry name" value="GbpA_2"/>
    <property type="match status" value="1"/>
</dbReference>
<dbReference type="Pfam" id="PF21868">
    <property type="entry name" value="GbpA_D3"/>
    <property type="match status" value="1"/>
</dbReference>
<dbReference type="Pfam" id="PF03067">
    <property type="entry name" value="LPMO_10"/>
    <property type="match status" value="1"/>
</dbReference>
<dbReference type="SUPFAM" id="SSF81296">
    <property type="entry name" value="E set domains"/>
    <property type="match status" value="1"/>
</dbReference>
<proteinExistence type="inferred from homology"/>
<feature type="signal peptide" evidence="1">
    <location>
        <begin position="1"/>
        <end position="24"/>
    </location>
</feature>
<feature type="chain" id="PRO_0000229721" description="GlcNAc-binding protein A">
    <location>
        <begin position="25"/>
        <end position="488"/>
    </location>
</feature>
<feature type="domain" description="Chitin-binding type-4" evidence="1">
    <location>
        <begin position="25"/>
        <end position="202"/>
    </location>
</feature>
<feature type="domain" description="Chitin-binding type-3" evidence="1">
    <location>
        <begin position="439"/>
        <end position="480"/>
    </location>
</feature>
<gene>
    <name evidence="1" type="primary">gbpA</name>
    <name type="ordered locus">PBPRB0312</name>
</gene>
<accession>Q6LKG5</accession>
<reference key="1">
    <citation type="journal article" date="2005" name="Science">
        <title>Life at depth: Photobacterium profundum genome sequence and expression analysis.</title>
        <authorList>
            <person name="Vezzi A."/>
            <person name="Campanaro S."/>
            <person name="D'Angelo M."/>
            <person name="Simonato F."/>
            <person name="Vitulo N."/>
            <person name="Lauro F.M."/>
            <person name="Cestaro A."/>
            <person name="Malacrida G."/>
            <person name="Simionati B."/>
            <person name="Cannata N."/>
            <person name="Romualdi C."/>
            <person name="Bartlett D.H."/>
            <person name="Valle G."/>
        </authorList>
    </citation>
    <scope>NUCLEOTIDE SEQUENCE [LARGE SCALE GENOMIC DNA]</scope>
    <source>
        <strain>ATCC BAA-1253 / SS9</strain>
    </source>
</reference>
<name>GBPA_PHOPR</name>